<accession>Q836J9</accession>
<sequence>MSVQFIRGTAVADLEAPLIQATKQWLEEDAQHEVFYLVPNHIKFEQEIQVLQKLRQLQTTTSDSITSTRLQVFSFYRLAWYYLQHTPFYSADVLSDAGAAMIFRKILVEAEEELQIFRGEINKPGFIQQLFQLYQEMREGNIEIAELYPFLEKQTENPKGQDLQLKFQDLTLIFTRFQLQMSQYGYESAEIIQHLSEYLQTVDLSNVQFVISGYQQFTARELKLIEVLMAQAGSVKVALLLDKQYPHDLPDPRSLFYEAGQTYHQLYQLARQKQIPILSDYVEKKEVLITNPDLQGLNDYWIQSQEHLPPLSTADWRGDGLFLWRAENVKEELTHVATEIRRLVVEEGYRYKEIQVLTRDLDCYENLLEPIFAEHEIPVYVDRDMAMDRHPLVEWIESLFAIHSYNYRYRDVLRFLRTELFMPMNQLATSEESLTDWLNQRNAWRRKVDITENVVLAYGYEGYYWSQEKDWEFIRYDFEAEEQEDVATMEEESNAIRQSLQRLLPSYFQAMISAKTGLEAATVFYHFLLQSGVATQLKMWRLQAIEAGQLETARNHEQTWDALMSLLDEYVTVYGESSFDFTTFQEIFVSGLEGLHYSKVPTAIDQVQVRAMDLTRPGAAKVTFAIGMTEEIFPQKIENKTLLSDEERQTINDTLTENQYLRGTTGRKIAQEPYVAYLVFSSARERLYLTYPSVKDTAQEVKPSPYFKNIQKDLNLPVFEKNETTIFDDETTSLAHISTYRTLIGELTRLKRQRKETQEGLLPFWLNMEKALMNQSIAPLAKQVFESLTHQNIPEKIDEVLAEPLYGKDIYTSVSRMESFYRCQYQYFSRYGLRLKERDVFGLSPAATGEFFHEALDQFFKLLIMNQRNLSELTDQEVNLLAEEVLNSILGDARFSVLTTSSRMNYIRYQLSQTIKKVSWALKRQSQRSGMTTVQTEVLFGQIAAKKGISGLELPLKNQGKIHVRGKIDRIDQLVTPESTYLGVIDYKSSHRKFNMTEAYYGLAMQMLTYLDVALMDAVQLVGQEAKPAGSLYLHVHNPTLSYEGKDDIEQQMLKKYQFDGLLMKDPDLLDHLDTSLQAKQSSLLFPIEESAKEQIKPGRRQEDKFVTEPELGALLSHNRNKFIEAGNQIIGGEVQLNPAYQGKERIACRYCPFRSVCDFDVMLKENNYHRIENLSKEEIMARLLNKDEEGATEDE</sequence>
<name>ADDB_ENTFA</name>
<reference key="1">
    <citation type="journal article" date="2003" name="Science">
        <title>Role of mobile DNA in the evolution of vancomycin-resistant Enterococcus faecalis.</title>
        <authorList>
            <person name="Paulsen I.T."/>
            <person name="Banerjei L."/>
            <person name="Myers G.S.A."/>
            <person name="Nelson K.E."/>
            <person name="Seshadri R."/>
            <person name="Read T.D."/>
            <person name="Fouts D.E."/>
            <person name="Eisen J.A."/>
            <person name="Gill S.R."/>
            <person name="Heidelberg J.F."/>
            <person name="Tettelin H."/>
            <person name="Dodson R.J."/>
            <person name="Umayam L.A."/>
            <person name="Brinkac L.M."/>
            <person name="Beanan M.J."/>
            <person name="Daugherty S.C."/>
            <person name="DeBoy R.T."/>
            <person name="Durkin S.A."/>
            <person name="Kolonay J.F."/>
            <person name="Madupu R."/>
            <person name="Nelson W.C."/>
            <person name="Vamathevan J.J."/>
            <person name="Tran B."/>
            <person name="Upton J."/>
            <person name="Hansen T."/>
            <person name="Shetty J."/>
            <person name="Khouri H.M."/>
            <person name="Utterback T.R."/>
            <person name="Radune D."/>
            <person name="Ketchum K.A."/>
            <person name="Dougherty B.A."/>
            <person name="Fraser C.M."/>
        </authorList>
    </citation>
    <scope>NUCLEOTIDE SEQUENCE [LARGE SCALE GENOMIC DNA]</scope>
    <source>
        <strain>ATCC 700802 / V583</strain>
    </source>
</reference>
<feature type="chain" id="PRO_0000379364" description="ATP-dependent helicase/deoxyribonuclease subunit B">
    <location>
        <begin position="1"/>
        <end position="1196"/>
    </location>
</feature>
<feature type="binding site" evidence="1">
    <location>
        <position position="823"/>
    </location>
    <ligand>
        <name>[4Fe-4S] cluster</name>
        <dbReference type="ChEBI" id="CHEBI:49883"/>
    </ligand>
</feature>
<feature type="binding site" evidence="1">
    <location>
        <position position="1149"/>
    </location>
    <ligand>
        <name>[4Fe-4S] cluster</name>
        <dbReference type="ChEBI" id="CHEBI:49883"/>
    </ligand>
</feature>
<feature type="binding site" evidence="1">
    <location>
        <position position="1152"/>
    </location>
    <ligand>
        <name>[4Fe-4S] cluster</name>
        <dbReference type="ChEBI" id="CHEBI:49883"/>
    </ligand>
</feature>
<feature type="binding site" evidence="1">
    <location>
        <position position="1158"/>
    </location>
    <ligand>
        <name>[4Fe-4S] cluster</name>
        <dbReference type="ChEBI" id="CHEBI:49883"/>
    </ligand>
</feature>
<evidence type="ECO:0000255" key="1">
    <source>
        <dbReference type="HAMAP-Rule" id="MF_01453"/>
    </source>
</evidence>
<dbReference type="EC" id="3.1.-.-" evidence="1"/>
<dbReference type="EMBL" id="AE016830">
    <property type="protein sequence ID" value="AAO80912.1"/>
    <property type="molecule type" value="Genomic_DNA"/>
</dbReference>
<dbReference type="RefSeq" id="NP_814842.1">
    <property type="nucleotide sequence ID" value="NC_004668.1"/>
</dbReference>
<dbReference type="RefSeq" id="WP_002386608.1">
    <property type="nucleotide sequence ID" value="NZ_KE136528.1"/>
</dbReference>
<dbReference type="SMR" id="Q836J9"/>
<dbReference type="STRING" id="226185.EF_1112"/>
<dbReference type="EnsemblBacteria" id="AAO80912">
    <property type="protein sequence ID" value="AAO80912"/>
    <property type="gene ID" value="EF_1112"/>
</dbReference>
<dbReference type="KEGG" id="efa:EF1112"/>
<dbReference type="PATRIC" id="fig|226185.45.peg.2383"/>
<dbReference type="eggNOG" id="COG3857">
    <property type="taxonomic scope" value="Bacteria"/>
</dbReference>
<dbReference type="HOGENOM" id="CLU_007838_0_0_9"/>
<dbReference type="Proteomes" id="UP000001415">
    <property type="component" value="Chromosome"/>
</dbReference>
<dbReference type="GO" id="GO:0051539">
    <property type="term" value="F:4 iron, 4 sulfur cluster binding"/>
    <property type="evidence" value="ECO:0007669"/>
    <property type="project" value="UniProtKB-KW"/>
</dbReference>
<dbReference type="GO" id="GO:0008409">
    <property type="term" value="F:5'-3' exonuclease activity"/>
    <property type="evidence" value="ECO:0007669"/>
    <property type="project" value="UniProtKB-UniRule"/>
</dbReference>
<dbReference type="GO" id="GO:0005524">
    <property type="term" value="F:ATP binding"/>
    <property type="evidence" value="ECO:0007669"/>
    <property type="project" value="UniProtKB-UniRule"/>
</dbReference>
<dbReference type="GO" id="GO:0003690">
    <property type="term" value="F:double-stranded DNA binding"/>
    <property type="evidence" value="ECO:0007669"/>
    <property type="project" value="UniProtKB-UniRule"/>
</dbReference>
<dbReference type="GO" id="GO:0004386">
    <property type="term" value="F:helicase activity"/>
    <property type="evidence" value="ECO:0007669"/>
    <property type="project" value="UniProtKB-KW"/>
</dbReference>
<dbReference type="GO" id="GO:0016817">
    <property type="term" value="F:hydrolase activity, acting on acid anhydrides"/>
    <property type="evidence" value="ECO:0007669"/>
    <property type="project" value="InterPro"/>
</dbReference>
<dbReference type="GO" id="GO:0046872">
    <property type="term" value="F:metal ion binding"/>
    <property type="evidence" value="ECO:0007669"/>
    <property type="project" value="UniProtKB-KW"/>
</dbReference>
<dbReference type="GO" id="GO:0000724">
    <property type="term" value="P:double-strand break repair via homologous recombination"/>
    <property type="evidence" value="ECO:0007669"/>
    <property type="project" value="UniProtKB-UniRule"/>
</dbReference>
<dbReference type="Gene3D" id="3.90.320.10">
    <property type="match status" value="1"/>
</dbReference>
<dbReference type="Gene3D" id="3.40.50.300">
    <property type="entry name" value="P-loop containing nucleotide triphosphate hydrolases"/>
    <property type="match status" value="3"/>
</dbReference>
<dbReference type="HAMAP" id="MF_01453">
    <property type="entry name" value="AddB_type2"/>
    <property type="match status" value="1"/>
</dbReference>
<dbReference type="InterPro" id="IPR049035">
    <property type="entry name" value="ADDB_N"/>
</dbReference>
<dbReference type="InterPro" id="IPR014141">
    <property type="entry name" value="DNA_helicase_suRexB"/>
</dbReference>
<dbReference type="InterPro" id="IPR027417">
    <property type="entry name" value="P-loop_NTPase"/>
</dbReference>
<dbReference type="InterPro" id="IPR011604">
    <property type="entry name" value="PDDEXK-like_dom_sf"/>
</dbReference>
<dbReference type="InterPro" id="IPR038726">
    <property type="entry name" value="PDDEXK_AddAB-type"/>
</dbReference>
<dbReference type="PANTHER" id="PTHR30591">
    <property type="entry name" value="RECBCD ENZYME SUBUNIT RECC"/>
    <property type="match status" value="1"/>
</dbReference>
<dbReference type="PANTHER" id="PTHR30591:SF1">
    <property type="entry name" value="RECBCD ENZYME SUBUNIT RECC"/>
    <property type="match status" value="1"/>
</dbReference>
<dbReference type="Pfam" id="PF21445">
    <property type="entry name" value="ADDB_N"/>
    <property type="match status" value="1"/>
</dbReference>
<dbReference type="Pfam" id="PF12705">
    <property type="entry name" value="PDDEXK_1"/>
    <property type="match status" value="1"/>
</dbReference>
<dbReference type="SUPFAM" id="SSF52540">
    <property type="entry name" value="P-loop containing nucleoside triphosphate hydrolases"/>
    <property type="match status" value="1"/>
</dbReference>
<comment type="function">
    <text evidence="1">The heterodimer acts as both an ATP-dependent DNA helicase and an ATP-dependent, dual-direction single-stranded exonuclease. Recognizes the chi site generating a DNA molecule suitable for the initiation of homologous recombination. This subunit has 5' -&gt; 3' nuclease activity but not helicase activity.</text>
</comment>
<comment type="cofactor">
    <cofactor evidence="1">
        <name>Mg(2+)</name>
        <dbReference type="ChEBI" id="CHEBI:18420"/>
    </cofactor>
</comment>
<comment type="cofactor">
    <cofactor evidence="1">
        <name>[4Fe-4S] cluster</name>
        <dbReference type="ChEBI" id="CHEBI:49883"/>
    </cofactor>
    <text evidence="1">Binds 1 [4Fe-4S] cluster.</text>
</comment>
<comment type="subunit">
    <text evidence="1">Heterodimer of AddA and RexB.</text>
</comment>
<comment type="miscellaneous">
    <text evidence="1">Despite having helicase-like domains, this subunit does not have helicase activity.</text>
</comment>
<comment type="similarity">
    <text evidence="1">Belongs to the helicase family. AddB/RexB type 2 subfamily.</text>
</comment>
<proteinExistence type="inferred from homology"/>
<protein>
    <recommendedName>
        <fullName evidence="1">ATP-dependent helicase/deoxyribonuclease subunit B</fullName>
        <ecNumber evidence="1">3.1.-.-</ecNumber>
    </recommendedName>
    <alternativeName>
        <fullName evidence="1">ATP-dependent helicase/nuclease subunit RexB</fullName>
    </alternativeName>
</protein>
<keyword id="KW-0004">4Fe-4S</keyword>
<keyword id="KW-0067">ATP-binding</keyword>
<keyword id="KW-0227">DNA damage</keyword>
<keyword id="KW-0234">DNA repair</keyword>
<keyword id="KW-0238">DNA-binding</keyword>
<keyword id="KW-0269">Exonuclease</keyword>
<keyword id="KW-0347">Helicase</keyword>
<keyword id="KW-0378">Hydrolase</keyword>
<keyword id="KW-0408">Iron</keyword>
<keyword id="KW-0411">Iron-sulfur</keyword>
<keyword id="KW-0479">Metal-binding</keyword>
<keyword id="KW-0540">Nuclease</keyword>
<keyword id="KW-0547">Nucleotide-binding</keyword>
<keyword id="KW-1185">Reference proteome</keyword>
<gene>
    <name evidence="1" type="primary">rexB</name>
    <name type="ordered locus">EF_1112</name>
</gene>
<organism>
    <name type="scientific">Enterococcus faecalis (strain ATCC 700802 / V583)</name>
    <dbReference type="NCBI Taxonomy" id="226185"/>
    <lineage>
        <taxon>Bacteria</taxon>
        <taxon>Bacillati</taxon>
        <taxon>Bacillota</taxon>
        <taxon>Bacilli</taxon>
        <taxon>Lactobacillales</taxon>
        <taxon>Enterococcaceae</taxon>
        <taxon>Enterococcus</taxon>
    </lineage>
</organism>